<keyword id="KW-0028">Amino-acid biosynthesis</keyword>
<keyword id="KW-0100">Branched-chain amino acid biosynthesis</keyword>
<keyword id="KW-0150">Chloroplast</keyword>
<keyword id="KW-0412">Isoleucine biosynthesis</keyword>
<keyword id="KW-0456">Lyase</keyword>
<keyword id="KW-0934">Plastid</keyword>
<keyword id="KW-0663">Pyridoxal phosphate</keyword>
<keyword id="KW-1185">Reference proteome</keyword>
<keyword id="KW-0677">Repeat</keyword>
<keyword id="KW-0809">Transit peptide</keyword>
<sequence length="606" mass="66182">MEVLRFTAVKSLNSCVRPEFTAMSSVIVPISTVKVSGTRKSKKKALICAKATEILSSPATVTEPLKAEPAEAPVPLLRVSPSSLQCEPGYLLPNSPVLGTGGVTGYEYLTNILSSKVYDVAYETPLQKAPKLSERLGVNVWLKREDLQPVFSFKIRGAYNMMAKLPKEQLEKGVICSSAGNHAQGVALSAQRLGCDAVIVMPVTTPDIKWKSVKRLGATVVLVGDSYDEAQAYAKKRAESEGRTFIPPFDHPDVIVGQGTVGMEINRQLKDNIHAIFVPVGGGGLIAGIAAYLKRVAPDIKIIGVEPLDANALALSLHHGQRVMLDQVGGFADGVAVKVVGEETYRLCEELIDGVVLVGRDAICASIKDMFEEKRSILEPAGALALAGAEAYCKYYGLKGENVVAITSGANMNFDRLRLVTELADVGRQREAVLATFMPEDPGSFKKFAEMVGPMNITEFKYRYNSDKERALVLYSVGLHTILELEGMVERMESADLQTINLTDNDLVKDHLRHLMGGRTNVHNELLCRFTFPEKPGALMKFLDAFSPRWNISLFHYRAQGDTGANVLVGIQVPPDEVVEFEGRADSLGYEYAMESLNEAYQLIMH</sequence>
<protein>
    <recommendedName>
        <fullName evidence="8">Threonine dehydratase 1 biosynthetic, chloroplastic</fullName>
        <ecNumber evidence="3 5">4.3.1.19</ecNumber>
    </recommendedName>
    <alternativeName>
        <fullName evidence="6">SlTD1</fullName>
    </alternativeName>
    <alternativeName>
        <fullName evidence="7">Threonine deaminase 1</fullName>
    </alternativeName>
</protein>
<name>TD1_SOLLC</name>
<proteinExistence type="evidence at protein level"/>
<feature type="transit peptide" description="Chloroplast" evidence="8">
    <location>
        <begin position="1"/>
        <end status="unknown"/>
    </location>
</feature>
<feature type="chain" id="PRO_0000445517" description="Threonine dehydratase 1 biosynthetic, chloroplastic" evidence="8">
    <location>
        <begin status="unknown"/>
        <end position="606"/>
    </location>
</feature>
<feature type="domain" description="ACT-like 1" evidence="2">
    <location>
        <begin position="432"/>
        <end position="504"/>
    </location>
</feature>
<feature type="domain" description="ACT-like 2" evidence="2">
    <location>
        <begin position="526"/>
        <end position="597"/>
    </location>
</feature>
<feature type="modified residue" description="N6-(pyridoxal phosphate)lysine" evidence="1">
    <location>
        <position position="154"/>
    </location>
</feature>
<comment type="function">
    <text evidence="9">Has a housekeeping role in isoleucine biosynthesis (Probable).</text>
</comment>
<comment type="catalytic activity">
    <reaction evidence="3 5">
        <text>L-threonine = 2-oxobutanoate + NH4(+)</text>
        <dbReference type="Rhea" id="RHEA:22108"/>
        <dbReference type="ChEBI" id="CHEBI:16763"/>
        <dbReference type="ChEBI" id="CHEBI:28938"/>
        <dbReference type="ChEBI" id="CHEBI:57926"/>
        <dbReference type="EC" id="4.3.1.19"/>
    </reaction>
</comment>
<comment type="cofactor">
    <cofactor evidence="3">
        <name>pyridoxal 5'-phosphate</name>
        <dbReference type="ChEBI" id="CHEBI:597326"/>
    </cofactor>
</comment>
<comment type="activity regulation">
    <text evidence="5">Strongly inhibited by 1 mM isoleucine.</text>
</comment>
<comment type="biophysicochemical properties">
    <phDependence>
        <text evidence="5">Active at alkaline pH.</text>
    </phDependence>
    <temperatureDependence>
        <text evidence="5">Optimum temperature is 16 degrees Celsius. Not active at temperatures above 55 degrees Celsius. Complete loss of activity by incubation at 55 degrees Celsius for 1 minute.</text>
    </temperatureDependence>
</comment>
<comment type="pathway">
    <text evidence="3">Amino-acid biosynthesis; L-isoleucine biosynthesis; 2-oxobutanoate from L-threonine: step 1/1.</text>
</comment>
<comment type="subcellular location">
    <subcellularLocation>
        <location evidence="8">Plastid</location>
        <location evidence="8">Chloroplast</location>
    </subcellularLocation>
</comment>
<comment type="tissue specificity">
    <text evidence="4">Expressed constitutively in all tissues examined including root, stem, petiole, leaf, immature flower bud, unopened flower and opened flower with the highest expression in opened flower and lowest in leaf.</text>
</comment>
<comment type="induction">
    <text evidence="4">Constitutively expressed. Not induced in response to methyl jasmonate (MeJA) or mechanical wounding.</text>
</comment>
<comment type="similarity">
    <text evidence="3 8">Belongs to the serine/threonine dehydratase family.</text>
</comment>
<gene>
    <name evidence="6" type="primary">TD1</name>
</gene>
<accession>A0FKE6</accession>
<organism evidence="10">
    <name type="scientific">Solanum lycopersicum</name>
    <name type="common">Tomato</name>
    <name type="synonym">Lycopersicon esculentum</name>
    <dbReference type="NCBI Taxonomy" id="4081"/>
    <lineage>
        <taxon>Eukaryota</taxon>
        <taxon>Viridiplantae</taxon>
        <taxon>Streptophyta</taxon>
        <taxon>Embryophyta</taxon>
        <taxon>Tracheophyta</taxon>
        <taxon>Spermatophyta</taxon>
        <taxon>Magnoliopsida</taxon>
        <taxon>eudicotyledons</taxon>
        <taxon>Gunneridae</taxon>
        <taxon>Pentapetalae</taxon>
        <taxon>asterids</taxon>
        <taxon>lamiids</taxon>
        <taxon>Solanales</taxon>
        <taxon>Solanaceae</taxon>
        <taxon>Solanoideae</taxon>
        <taxon>Solaneae</taxon>
        <taxon>Solanum</taxon>
        <taxon>Solanum subgen. Lycopersicon</taxon>
    </lineage>
</organism>
<evidence type="ECO:0000250" key="1">
    <source>
        <dbReference type="UniProtKB" id="P04968"/>
    </source>
</evidence>
<evidence type="ECO:0000255" key="2">
    <source>
        <dbReference type="PROSITE-ProRule" id="PRU01008"/>
    </source>
</evidence>
<evidence type="ECO:0000255" key="3">
    <source>
        <dbReference type="RuleBase" id="RU362012"/>
    </source>
</evidence>
<evidence type="ECO:0000269" key="4">
    <source>
    </source>
</evidence>
<evidence type="ECO:0000269" key="5">
    <source>
    </source>
</evidence>
<evidence type="ECO:0000303" key="6">
    <source>
    </source>
</evidence>
<evidence type="ECO:0000303" key="7">
    <source>
    </source>
</evidence>
<evidence type="ECO:0000305" key="8"/>
<evidence type="ECO:0000305" key="9">
    <source>
    </source>
</evidence>
<evidence type="ECO:0000312" key="10">
    <source>
        <dbReference type="EMBL" id="ABK20067.1"/>
    </source>
</evidence>
<reference evidence="10" key="1">
    <citation type="journal article" date="2007" name="Plant Physiol.">
        <title>Stability of plant defense proteins in the gut of insect herbivores.</title>
        <authorList>
            <person name="Chen H."/>
            <person name="Gonzales-Vigil E."/>
            <person name="Wilkerson C.G."/>
            <person name="Howe G.A."/>
        </authorList>
    </citation>
    <scope>NUCLEOTIDE SEQUENCE [MRNA]</scope>
    <scope>TISSUE SPECIFICITY</scope>
    <scope>INDUCTION</scope>
</reference>
<reference key="2">
    <citation type="journal article" date="2012" name="Nature">
        <title>The tomato genome sequence provides insights into fleshy fruit evolution.</title>
        <authorList>
            <consortium name="Tomato Genome Consortium"/>
        </authorList>
    </citation>
    <scope>NUCLEOTIDE SEQUENCE [LARGE SCALE GENOMIC DNA]</scope>
    <source>
        <strain>cv. Heinz 1706</strain>
    </source>
</reference>
<reference key="3">
    <citation type="journal article" date="2011" name="Proc. Natl. Acad. Sci. U.S.A.">
        <title>Adaptive evolution of threonine deaminase in plant defense against insect herbivores.</title>
        <authorList>
            <person name="Gonzales-Vigil E."/>
            <person name="Bianchetti C.M."/>
            <person name="Phillips G.N. Jr."/>
            <person name="Howe G.A."/>
        </authorList>
    </citation>
    <scope>CATALYTIC ACTIVITY</scope>
    <scope>ACTIVITY REGULATION</scope>
    <scope>BIOPHYSICOCHEMICAL PROPERTIES</scope>
</reference>
<dbReference type="EC" id="4.3.1.19" evidence="3 5"/>
<dbReference type="EMBL" id="EF026088">
    <property type="protein sequence ID" value="ABK20067.1"/>
    <property type="molecule type" value="mRNA"/>
</dbReference>
<dbReference type="SMR" id="A0FKE6"/>
<dbReference type="FunCoup" id="A0FKE6">
    <property type="interactions" value="1319"/>
</dbReference>
<dbReference type="STRING" id="4081.A0FKE6"/>
<dbReference type="PaxDb" id="4081-Solyc10g083760.1.1"/>
<dbReference type="KEGG" id="sly:100037737"/>
<dbReference type="eggNOG" id="KOG1250">
    <property type="taxonomic scope" value="Eukaryota"/>
</dbReference>
<dbReference type="HOGENOM" id="CLU_021152_6_2_1"/>
<dbReference type="InParanoid" id="A0FKE6"/>
<dbReference type="OrthoDB" id="4418812at2759"/>
<dbReference type="PhylomeDB" id="A0FKE6"/>
<dbReference type="UniPathway" id="UPA00047">
    <property type="reaction ID" value="UER00054"/>
</dbReference>
<dbReference type="Proteomes" id="UP000004994">
    <property type="component" value="Unplaced"/>
</dbReference>
<dbReference type="GO" id="GO:0009507">
    <property type="term" value="C:chloroplast"/>
    <property type="evidence" value="ECO:0007669"/>
    <property type="project" value="UniProtKB-SubCell"/>
</dbReference>
<dbReference type="GO" id="GO:0030170">
    <property type="term" value="F:pyridoxal phosphate binding"/>
    <property type="evidence" value="ECO:0000250"/>
    <property type="project" value="UniProtKB"/>
</dbReference>
<dbReference type="GO" id="GO:0004794">
    <property type="term" value="F:threonine deaminase activity"/>
    <property type="evidence" value="ECO:0000314"/>
    <property type="project" value="UniProtKB"/>
</dbReference>
<dbReference type="GO" id="GO:0009097">
    <property type="term" value="P:isoleucine biosynthetic process"/>
    <property type="evidence" value="ECO:0000314"/>
    <property type="project" value="UniProtKB"/>
</dbReference>
<dbReference type="GO" id="GO:0006567">
    <property type="term" value="P:threonine catabolic process"/>
    <property type="evidence" value="ECO:0000314"/>
    <property type="project" value="UniProtKB"/>
</dbReference>
<dbReference type="CDD" id="cd04906">
    <property type="entry name" value="ACT_ThrD-I_1"/>
    <property type="match status" value="1"/>
</dbReference>
<dbReference type="CDD" id="cd04907">
    <property type="entry name" value="ACT_ThrD-I_2"/>
    <property type="match status" value="1"/>
</dbReference>
<dbReference type="CDD" id="cd01562">
    <property type="entry name" value="Thr-dehyd"/>
    <property type="match status" value="1"/>
</dbReference>
<dbReference type="FunFam" id="3.40.50.1100:FF:000008">
    <property type="entry name" value="L-threonine dehydratase"/>
    <property type="match status" value="1"/>
</dbReference>
<dbReference type="FunFam" id="3.40.1020.10:FF:000003">
    <property type="entry name" value="Threonine dehydratase"/>
    <property type="match status" value="1"/>
</dbReference>
<dbReference type="Gene3D" id="3.40.50.1100">
    <property type="match status" value="2"/>
</dbReference>
<dbReference type="Gene3D" id="3.40.1020.10">
    <property type="entry name" value="Biosynthetic Threonine Deaminase, Domain 3"/>
    <property type="match status" value="1"/>
</dbReference>
<dbReference type="InterPro" id="IPR045865">
    <property type="entry name" value="ACT-like_dom_sf"/>
</dbReference>
<dbReference type="InterPro" id="IPR050147">
    <property type="entry name" value="Ser/Thr_Dehydratase"/>
</dbReference>
<dbReference type="InterPro" id="IPR000634">
    <property type="entry name" value="Ser/Thr_deHydtase_PyrdxlP-BS"/>
</dbReference>
<dbReference type="InterPro" id="IPR001721">
    <property type="entry name" value="TD_ACT-like"/>
</dbReference>
<dbReference type="InterPro" id="IPR038110">
    <property type="entry name" value="TD_ACT-like_sf"/>
</dbReference>
<dbReference type="InterPro" id="IPR005787">
    <property type="entry name" value="Thr_deHydtase_biosynth"/>
</dbReference>
<dbReference type="InterPro" id="IPR001926">
    <property type="entry name" value="TrpB-like_PALP"/>
</dbReference>
<dbReference type="InterPro" id="IPR036052">
    <property type="entry name" value="TrpB-like_PALP_sf"/>
</dbReference>
<dbReference type="NCBIfam" id="TIGR01124">
    <property type="entry name" value="ilvA_2Cterm"/>
    <property type="match status" value="1"/>
</dbReference>
<dbReference type="NCBIfam" id="NF006674">
    <property type="entry name" value="PRK09224.1"/>
    <property type="match status" value="1"/>
</dbReference>
<dbReference type="PANTHER" id="PTHR48078:SF11">
    <property type="entry name" value="THREONINE DEHYDRATASE, MITOCHONDRIAL"/>
    <property type="match status" value="1"/>
</dbReference>
<dbReference type="PANTHER" id="PTHR48078">
    <property type="entry name" value="THREONINE DEHYDRATASE, MITOCHONDRIAL-RELATED"/>
    <property type="match status" value="1"/>
</dbReference>
<dbReference type="Pfam" id="PF00291">
    <property type="entry name" value="PALP"/>
    <property type="match status" value="1"/>
</dbReference>
<dbReference type="Pfam" id="PF00585">
    <property type="entry name" value="Thr_dehydrat_C"/>
    <property type="match status" value="2"/>
</dbReference>
<dbReference type="SUPFAM" id="SSF55021">
    <property type="entry name" value="ACT-like"/>
    <property type="match status" value="1"/>
</dbReference>
<dbReference type="SUPFAM" id="SSF53686">
    <property type="entry name" value="Tryptophan synthase beta subunit-like PLP-dependent enzymes"/>
    <property type="match status" value="1"/>
</dbReference>
<dbReference type="PROSITE" id="PS51672">
    <property type="entry name" value="ACT_LIKE"/>
    <property type="match status" value="2"/>
</dbReference>
<dbReference type="PROSITE" id="PS00165">
    <property type="entry name" value="DEHYDRATASE_SER_THR"/>
    <property type="match status" value="1"/>
</dbReference>